<gene>
    <name type="primary">ymcA</name>
    <name type="ordered locus">BSU17020</name>
</gene>
<protein>
    <recommendedName>
        <fullName>Uncharacterized protein YmcA</fullName>
    </recommendedName>
</protein>
<dbReference type="EMBL" id="AL009126">
    <property type="protein sequence ID" value="CAB13575.1"/>
    <property type="molecule type" value="Genomic_DNA"/>
</dbReference>
<dbReference type="PIR" id="C69884">
    <property type="entry name" value="C69884"/>
</dbReference>
<dbReference type="RefSeq" id="WP_003231834.1">
    <property type="nucleotide sequence ID" value="NZ_OZ025638.1"/>
</dbReference>
<dbReference type="PDB" id="2PIH">
    <property type="method" value="X-ray"/>
    <property type="resolution" value="2.10 A"/>
    <property type="chains" value="A/B=1-143"/>
</dbReference>
<dbReference type="PDB" id="6PRH">
    <property type="method" value="X-ray"/>
    <property type="resolution" value="2.08 A"/>
    <property type="chains" value="A=1-122"/>
</dbReference>
<dbReference type="PDB" id="6PRK">
    <property type="method" value="X-ray"/>
    <property type="resolution" value="3.20 A"/>
    <property type="chains" value="B=1-122"/>
</dbReference>
<dbReference type="PDBsum" id="2PIH"/>
<dbReference type="PDBsum" id="6PRH"/>
<dbReference type="PDBsum" id="6PRK"/>
<dbReference type="SMR" id="O31779"/>
<dbReference type="FunCoup" id="O31779">
    <property type="interactions" value="13"/>
</dbReference>
<dbReference type="STRING" id="224308.BSU17020"/>
<dbReference type="PaxDb" id="224308-BSU17020"/>
<dbReference type="EnsemblBacteria" id="CAB13575">
    <property type="protein sequence ID" value="CAB13575"/>
    <property type="gene ID" value="BSU_17020"/>
</dbReference>
<dbReference type="GeneID" id="11239555"/>
<dbReference type="GeneID" id="939581"/>
<dbReference type="KEGG" id="bsu:BSU17020"/>
<dbReference type="PATRIC" id="fig|224308.179.peg.1843"/>
<dbReference type="eggNOG" id="COG4550">
    <property type="taxonomic scope" value="Bacteria"/>
</dbReference>
<dbReference type="InParanoid" id="O31779"/>
<dbReference type="OrthoDB" id="2167788at2"/>
<dbReference type="PhylomeDB" id="O31779"/>
<dbReference type="BioCyc" id="BSUB:BSU17020-MONOMER"/>
<dbReference type="EvolutionaryTrace" id="O31779"/>
<dbReference type="PRO" id="PR:O31779"/>
<dbReference type="Proteomes" id="UP000001570">
    <property type="component" value="Chromosome"/>
</dbReference>
<dbReference type="Gene3D" id="1.20.1500.10">
    <property type="entry name" value="YheA/YmcA-like"/>
    <property type="match status" value="1"/>
</dbReference>
<dbReference type="InterPro" id="IPR052767">
    <property type="entry name" value="Bact_com_dev_regulator"/>
</dbReference>
<dbReference type="InterPro" id="IPR016783">
    <property type="entry name" value="Biofilm_formation_YmcA"/>
</dbReference>
<dbReference type="InterPro" id="IPR010368">
    <property type="entry name" value="Com_YlbF"/>
</dbReference>
<dbReference type="InterPro" id="IPR023378">
    <property type="entry name" value="YheA/YmcA-like_dom_sf"/>
</dbReference>
<dbReference type="PANTHER" id="PTHR38448">
    <property type="entry name" value="REGULATORY PROTEIN YLBF-RELATED"/>
    <property type="match status" value="1"/>
</dbReference>
<dbReference type="PANTHER" id="PTHR38448:SF1">
    <property type="entry name" value="YLBF FAMILY REGULATOR"/>
    <property type="match status" value="1"/>
</dbReference>
<dbReference type="Pfam" id="PF06133">
    <property type="entry name" value="Com_YlbF"/>
    <property type="match status" value="1"/>
</dbReference>
<dbReference type="PIRSF" id="PIRSF021287">
    <property type="entry name" value="Biofilm_formation_YmcA"/>
    <property type="match status" value="1"/>
</dbReference>
<dbReference type="SUPFAM" id="SSF158622">
    <property type="entry name" value="YheA/YmcA-like"/>
    <property type="match status" value="1"/>
</dbReference>
<reference key="1">
    <citation type="journal article" date="1997" name="Nature">
        <title>The complete genome sequence of the Gram-positive bacterium Bacillus subtilis.</title>
        <authorList>
            <person name="Kunst F."/>
            <person name="Ogasawara N."/>
            <person name="Moszer I."/>
            <person name="Albertini A.M."/>
            <person name="Alloni G."/>
            <person name="Azevedo V."/>
            <person name="Bertero M.G."/>
            <person name="Bessieres P."/>
            <person name="Bolotin A."/>
            <person name="Borchert S."/>
            <person name="Borriss R."/>
            <person name="Boursier L."/>
            <person name="Brans A."/>
            <person name="Braun M."/>
            <person name="Brignell S.C."/>
            <person name="Bron S."/>
            <person name="Brouillet S."/>
            <person name="Bruschi C.V."/>
            <person name="Caldwell B."/>
            <person name="Capuano V."/>
            <person name="Carter N.M."/>
            <person name="Choi S.-K."/>
            <person name="Codani J.-J."/>
            <person name="Connerton I.F."/>
            <person name="Cummings N.J."/>
            <person name="Daniel R.A."/>
            <person name="Denizot F."/>
            <person name="Devine K.M."/>
            <person name="Duesterhoeft A."/>
            <person name="Ehrlich S.D."/>
            <person name="Emmerson P.T."/>
            <person name="Entian K.-D."/>
            <person name="Errington J."/>
            <person name="Fabret C."/>
            <person name="Ferrari E."/>
            <person name="Foulger D."/>
            <person name="Fritz C."/>
            <person name="Fujita M."/>
            <person name="Fujita Y."/>
            <person name="Fuma S."/>
            <person name="Galizzi A."/>
            <person name="Galleron N."/>
            <person name="Ghim S.-Y."/>
            <person name="Glaser P."/>
            <person name="Goffeau A."/>
            <person name="Golightly E.J."/>
            <person name="Grandi G."/>
            <person name="Guiseppi G."/>
            <person name="Guy B.J."/>
            <person name="Haga K."/>
            <person name="Haiech J."/>
            <person name="Harwood C.R."/>
            <person name="Henaut A."/>
            <person name="Hilbert H."/>
            <person name="Holsappel S."/>
            <person name="Hosono S."/>
            <person name="Hullo M.-F."/>
            <person name="Itaya M."/>
            <person name="Jones L.-M."/>
            <person name="Joris B."/>
            <person name="Karamata D."/>
            <person name="Kasahara Y."/>
            <person name="Klaerr-Blanchard M."/>
            <person name="Klein C."/>
            <person name="Kobayashi Y."/>
            <person name="Koetter P."/>
            <person name="Koningstein G."/>
            <person name="Krogh S."/>
            <person name="Kumano M."/>
            <person name="Kurita K."/>
            <person name="Lapidus A."/>
            <person name="Lardinois S."/>
            <person name="Lauber J."/>
            <person name="Lazarevic V."/>
            <person name="Lee S.-M."/>
            <person name="Levine A."/>
            <person name="Liu H."/>
            <person name="Masuda S."/>
            <person name="Mauel C."/>
            <person name="Medigue C."/>
            <person name="Medina N."/>
            <person name="Mellado R.P."/>
            <person name="Mizuno M."/>
            <person name="Moestl D."/>
            <person name="Nakai S."/>
            <person name="Noback M."/>
            <person name="Noone D."/>
            <person name="O'Reilly M."/>
            <person name="Ogawa K."/>
            <person name="Ogiwara A."/>
            <person name="Oudega B."/>
            <person name="Park S.-H."/>
            <person name="Parro V."/>
            <person name="Pohl T.M."/>
            <person name="Portetelle D."/>
            <person name="Porwollik S."/>
            <person name="Prescott A.M."/>
            <person name="Presecan E."/>
            <person name="Pujic P."/>
            <person name="Purnelle B."/>
            <person name="Rapoport G."/>
            <person name="Rey M."/>
            <person name="Reynolds S."/>
            <person name="Rieger M."/>
            <person name="Rivolta C."/>
            <person name="Rocha E."/>
            <person name="Roche B."/>
            <person name="Rose M."/>
            <person name="Sadaie Y."/>
            <person name="Sato T."/>
            <person name="Scanlan E."/>
            <person name="Schleich S."/>
            <person name="Schroeter R."/>
            <person name="Scoffone F."/>
            <person name="Sekiguchi J."/>
            <person name="Sekowska A."/>
            <person name="Seror S.J."/>
            <person name="Serror P."/>
            <person name="Shin B.-S."/>
            <person name="Soldo B."/>
            <person name="Sorokin A."/>
            <person name="Tacconi E."/>
            <person name="Takagi T."/>
            <person name="Takahashi H."/>
            <person name="Takemaru K."/>
            <person name="Takeuchi M."/>
            <person name="Tamakoshi A."/>
            <person name="Tanaka T."/>
            <person name="Terpstra P."/>
            <person name="Tognoni A."/>
            <person name="Tosato V."/>
            <person name="Uchiyama S."/>
            <person name="Vandenbol M."/>
            <person name="Vannier F."/>
            <person name="Vassarotti A."/>
            <person name="Viari A."/>
            <person name="Wambutt R."/>
            <person name="Wedler E."/>
            <person name="Wedler H."/>
            <person name="Weitzenegger T."/>
            <person name="Winters P."/>
            <person name="Wipat A."/>
            <person name="Yamamoto H."/>
            <person name="Yamane K."/>
            <person name="Yasumoto K."/>
            <person name="Yata K."/>
            <person name="Yoshida K."/>
            <person name="Yoshikawa H.-F."/>
            <person name="Zumstein E."/>
            <person name="Yoshikawa H."/>
            <person name="Danchin A."/>
        </authorList>
    </citation>
    <scope>NUCLEOTIDE SEQUENCE [LARGE SCALE GENOMIC DNA]</scope>
    <source>
        <strain>168</strain>
    </source>
</reference>
<reference key="2">
    <citation type="journal article" date="2004" name="J. Bacteriol.">
        <title>Genes involved in formation of structured multicellular communities by Bacillus subtilis.</title>
        <authorList>
            <person name="Branda S.S."/>
            <person name="Gonzalez-Pastor J.E."/>
            <person name="Dervyn E."/>
            <person name="Ehrlich S.D."/>
            <person name="Losick R."/>
            <person name="Kolter R."/>
        </authorList>
    </citation>
    <scope>ROLE IN FORMATION OF BIOFILMS</scope>
    <source>
        <strain>168</strain>
        <strain>3610</strain>
    </source>
</reference>
<reference key="3">
    <citation type="submission" date="2007-05" db="PDB data bank">
        <title>Crystal structure of protein ymcA from Bacillus subtilis.</title>
        <authorList>
            <consortium name="Northeast structural genomics consortium (NESG)"/>
        </authorList>
    </citation>
    <scope>X-RAY CRYSTALLOGRAPHY (2.1 ANGSTROMS)</scope>
</reference>
<evidence type="ECO:0000269" key="1">
    <source>
    </source>
</evidence>
<evidence type="ECO:0007829" key="2">
    <source>
        <dbReference type="PDB" id="6PRH"/>
    </source>
</evidence>
<proteinExistence type="evidence at protein level"/>
<comment type="function">
    <text evidence="1">May work together with YlbF to regulate community development.</text>
</comment>
<feature type="chain" id="PRO_0000049633" description="Uncharacterized protein YmcA">
    <location>
        <begin position="1"/>
        <end position="143"/>
    </location>
</feature>
<feature type="helix" evidence="2">
    <location>
        <begin position="6"/>
        <end position="21"/>
    </location>
</feature>
<feature type="helix" evidence="2">
    <location>
        <begin position="24"/>
        <end position="36"/>
    </location>
</feature>
<feature type="helix" evidence="2">
    <location>
        <begin position="40"/>
        <end position="61"/>
    </location>
</feature>
<feature type="helix" evidence="2">
    <location>
        <begin position="65"/>
        <end position="84"/>
    </location>
</feature>
<feature type="helix" evidence="2">
    <location>
        <begin position="86"/>
        <end position="120"/>
    </location>
</feature>
<keyword id="KW-0002">3D-structure</keyword>
<keyword id="KW-1185">Reference proteome</keyword>
<name>YMCA_BACSU</name>
<accession>O31779</accession>
<organism>
    <name type="scientific">Bacillus subtilis (strain 168)</name>
    <dbReference type="NCBI Taxonomy" id="224308"/>
    <lineage>
        <taxon>Bacteria</taxon>
        <taxon>Bacillati</taxon>
        <taxon>Bacillota</taxon>
        <taxon>Bacilli</taxon>
        <taxon>Bacillales</taxon>
        <taxon>Bacillaceae</taxon>
        <taxon>Bacillus</taxon>
    </lineage>
</organism>
<sequence length="143" mass="16166">MTLYSKKDIVQQARNLAKMISETEEVDFFKRAEAQINENDKVSTIVNQIKALQKQAVNLKHYEKHEALKQVEAKIDALQEELEEIPVIQEFRDSQMEVNDLLQLVAHTISNQVTNEIITSTGGDLLKGETGSKVKHSNNSCSL</sequence>